<sequence>ALWKTLLKNVGKAAGKAALNAVTDMVNQ</sequence>
<dbReference type="SMR" id="P83639"/>
<dbReference type="GO" id="GO:0005576">
    <property type="term" value="C:extracellular region"/>
    <property type="evidence" value="ECO:0007669"/>
    <property type="project" value="UniProtKB-SubCell"/>
</dbReference>
<dbReference type="GO" id="GO:0042742">
    <property type="term" value="P:defense response to bacterium"/>
    <property type="evidence" value="ECO:0007669"/>
    <property type="project" value="UniProtKB-KW"/>
</dbReference>
<dbReference type="InterPro" id="IPR022731">
    <property type="entry name" value="Dermaseptin_dom"/>
</dbReference>
<dbReference type="Pfam" id="PF12121">
    <property type="entry name" value="DD_K"/>
    <property type="match status" value="1"/>
</dbReference>
<name>DRS2_PHYDS</name>
<comment type="function">
    <text evidence="2 3 4 5">Has antibacterial activity against the Gram-positive bacteria S.aureus and E.faecalis, and the Gram-negative bacteria P.aeruginosa and E.coli. Has antiprotozoal activity against T.cruzi. Has antifungal activity against the yeasts C.tropicalis (MIC=10.9 uM), C.guilliermondii (MIC=21.8 uM), C.albicans (MIC=21.8 uM) and C.albicans ATCC 1023 (MIC=10.9 uM). Decreases viability of murine peritoneal cells. Fuses to, and disrupts liposomes.</text>
</comment>
<comment type="subcellular location">
    <subcellularLocation>
        <location evidence="2">Secreted</location>
    </subcellularLocation>
</comment>
<comment type="tissue specificity">
    <text evidence="2">Expressed by the skin glands.</text>
</comment>
<comment type="mass spectrometry"/>
<comment type="similarity">
    <text evidence="1">Belongs to the frog skin active peptide (FSAP) family. Dermaseptin subfamily.</text>
</comment>
<comment type="online information" name="The antimicrobial peptide database">
    <link uri="https://wangapd3.com/database/query_output.php?ID=0958"/>
</comment>
<proteinExistence type="evidence at protein level"/>
<feature type="peptide" id="PRO_0000043637" description="Dermaseptin-DI2" evidence="2">
    <location>
        <begin position="1"/>
        <end position="28"/>
    </location>
</feature>
<accession>P83639</accession>
<organism>
    <name type="scientific">Phyllomedusa distincta</name>
    <name type="common">Monkey frog</name>
    <dbReference type="NCBI Taxonomy" id="164618"/>
    <lineage>
        <taxon>Eukaryota</taxon>
        <taxon>Metazoa</taxon>
        <taxon>Chordata</taxon>
        <taxon>Craniata</taxon>
        <taxon>Vertebrata</taxon>
        <taxon>Euteleostomi</taxon>
        <taxon>Amphibia</taxon>
        <taxon>Batrachia</taxon>
        <taxon>Anura</taxon>
        <taxon>Neobatrachia</taxon>
        <taxon>Hyloidea</taxon>
        <taxon>Hylidae</taxon>
        <taxon>Phyllomedusinae</taxon>
        <taxon>Phyllomedusa</taxon>
    </lineage>
</organism>
<reference key="1">
    <citation type="journal article" date="1999" name="Peptides">
        <title>Antimicrobial peptides from the Brazilian frog Phyllomedusa distincta.</title>
        <authorList>
            <person name="Batista C.V.F."/>
            <person name="da Silva L.R."/>
            <person name="Sebben A."/>
            <person name="Scaloni A."/>
            <person name="Ferrara L."/>
            <person name="Paiva G.R."/>
            <person name="Olamendi-Portugal T."/>
            <person name="Possani L.D."/>
            <person name="Bloch C. Jr."/>
        </authorList>
    </citation>
    <scope>PROTEIN SEQUENCE</scope>
    <scope>FUNCTION</scope>
    <scope>SUBCELLULAR LOCATION</scope>
    <scope>TISSUE SPECIFICITY</scope>
    <scope>MASS SPECTROMETRY</scope>
    <scope>CIRCULAR DICHROISM ANALYSIS</scope>
    <scope>SYNTHESIS</scope>
    <source>
        <tissue>Skin secretion</tissue>
    </source>
</reference>
<reference key="2">
    <citation type="journal article" date="2002" name="J. Biol. Chem.">
        <title>Dermaseptins from Phyllomedusa oreades and Phyllomedusa distincta. Anti-Trypanosoma cruzi activity without cytotoxicity to mammalian cells.</title>
        <authorList>
            <person name="Brand G.D."/>
            <person name="Leite J.R.S.A."/>
            <person name="Silva L.P."/>
            <person name="Albuquerque S."/>
            <person name="Prates M.V."/>
            <person name="Azevedo R.B."/>
            <person name="Carregaro V."/>
            <person name="Silva J.S."/>
            <person name="Sa V.C.L."/>
            <person name="Brandao R.A."/>
            <person name="Bloch C. Jr."/>
        </authorList>
    </citation>
    <scope>SYNTHESIS</scope>
    <scope>FUNCTION AS AN ANTIPROTOZOAN PROTEIN</scope>
</reference>
<reference key="3">
    <citation type="journal article" date="2008" name="Comp. Biochem. Physiol.">
        <title>Dermaseptins from Phyllomedusa oreades and Phyllomedusa distincta: liposomes fusion and/or lysis investigated by fluorescence and atomic force microscopy.</title>
        <authorList>
            <person name="Silva L.P."/>
            <person name="Leite J.R.S.A."/>
            <person name="Brand G.D."/>
            <person name="Regis W.B."/>
            <person name="Tedesco A.C."/>
            <person name="Azevedo R.B."/>
            <person name="Freitas S.M."/>
            <person name="Bloch C. Jr."/>
        </authorList>
    </citation>
    <scope>FUNCTION</scope>
    <scope>SYNTHESIS</scope>
</reference>
<reference key="4">
    <citation type="journal article" date="2008" name="Comp. Biochem. Physiol.">
        <title>Dermaseptins from Phyllomedusa oreades and Phyllomedusa distincta: Secondary structure, antimicrobial activity, and mammalian cell toxicity.</title>
        <authorList>
            <person name="Leite J.R.S.A."/>
            <person name="Brand G.D."/>
            <person name="Silva L.P."/>
            <person name="Kuckelhaus S.A.S."/>
            <person name="Bento W.R.C."/>
            <person name="Araujo A.L.T."/>
            <person name="Martins G.R."/>
            <person name="Lazzari A.M."/>
            <person name="Bloch C. Jr."/>
        </authorList>
    </citation>
    <scope>FUNCTION</scope>
    <scope>SYNTHESIS</scope>
</reference>
<reference key="5">
    <citation type="journal article" date="2008" name="Peptides">
        <title>A consistent nomenclature of antimicrobial peptides isolated from frogs of the subfamily Phyllomedusinae.</title>
        <authorList>
            <person name="Amiche M."/>
            <person name="Ladram A."/>
            <person name="Nicolas P."/>
        </authorList>
    </citation>
    <scope>NOMENCLATURE</scope>
</reference>
<keyword id="KW-0878">Amphibian defense peptide</keyword>
<keyword id="KW-0044">Antibiotic</keyword>
<keyword id="KW-0929">Antimicrobial</keyword>
<keyword id="KW-0903">Direct protein sequencing</keyword>
<keyword id="KW-0964">Secreted</keyword>
<protein>
    <recommendedName>
        <fullName evidence="7">Dermaseptin-DI2</fullName>
        <shortName evidence="7">DRS-DI2</shortName>
    </recommendedName>
    <alternativeName>
        <fullName evidence="6">Dermadistinctin-L</fullName>
        <shortName evidence="6">DD L</shortName>
    </alternativeName>
</protein>
<evidence type="ECO:0000255" key="1"/>
<evidence type="ECO:0000269" key="2">
    <source>
    </source>
</evidence>
<evidence type="ECO:0000269" key="3">
    <source>
    </source>
</evidence>
<evidence type="ECO:0000269" key="4">
    <source>
    </source>
</evidence>
<evidence type="ECO:0000269" key="5">
    <source>
    </source>
</evidence>
<evidence type="ECO:0000303" key="6">
    <source>
    </source>
</evidence>
<evidence type="ECO:0000303" key="7">
    <source>
    </source>
</evidence>